<comment type="function">
    <text evidence="1">Dephosphorylates the phosphotyrosine-containing proteins.</text>
</comment>
<comment type="catalytic activity">
    <reaction>
        <text>O-phospho-L-tyrosyl-[protein] + H2O = L-tyrosyl-[protein] + phosphate</text>
        <dbReference type="Rhea" id="RHEA:10684"/>
        <dbReference type="Rhea" id="RHEA-COMP:10136"/>
        <dbReference type="Rhea" id="RHEA-COMP:20101"/>
        <dbReference type="ChEBI" id="CHEBI:15377"/>
        <dbReference type="ChEBI" id="CHEBI:43474"/>
        <dbReference type="ChEBI" id="CHEBI:46858"/>
        <dbReference type="ChEBI" id="CHEBI:61978"/>
        <dbReference type="EC" id="3.1.3.48"/>
    </reaction>
</comment>
<comment type="similarity">
    <text evidence="3">Belongs to the low molecular weight phosphotyrosine protein phosphatase family.</text>
</comment>
<protein>
    <recommendedName>
        <fullName>Low molecular weight protein-tyrosine-phosphatase PtpA</fullName>
        <ecNumber>3.1.3.48</ecNumber>
    </recommendedName>
    <alternativeName>
        <fullName>Phosphotyrosine phosphatase A</fullName>
        <shortName>PTPase A</shortName>
    </alternativeName>
</protein>
<name>PTPA_STAES</name>
<keyword id="KW-0378">Hydrolase</keyword>
<keyword id="KW-0904">Protein phosphatase</keyword>
<feature type="chain" id="PRO_0000300666" description="Low molecular weight protein-tyrosine-phosphatase PtpA">
    <location>
        <begin position="1"/>
        <end position="154"/>
    </location>
</feature>
<feature type="active site" description="Nucleophile" evidence="2">
    <location>
        <position position="8"/>
    </location>
</feature>
<feature type="active site" evidence="2">
    <location>
        <position position="14"/>
    </location>
</feature>
<feature type="active site" description="Proton donor" evidence="2">
    <location>
        <position position="120"/>
    </location>
</feature>
<accession>Q8CNQ1</accession>
<dbReference type="EC" id="3.1.3.48"/>
<dbReference type="EMBL" id="AE015929">
    <property type="protein sequence ID" value="AAO05165.1"/>
    <property type="molecule type" value="Genomic_DNA"/>
</dbReference>
<dbReference type="RefSeq" id="NP_765121.1">
    <property type="nucleotide sequence ID" value="NC_004461.1"/>
</dbReference>
<dbReference type="RefSeq" id="WP_001830437.1">
    <property type="nucleotide sequence ID" value="NZ_WBME01000010.1"/>
</dbReference>
<dbReference type="SMR" id="Q8CNQ1"/>
<dbReference type="KEGG" id="sep:SE_1566"/>
<dbReference type="PATRIC" id="fig|176280.10.peg.1530"/>
<dbReference type="eggNOG" id="COG0394">
    <property type="taxonomic scope" value="Bacteria"/>
</dbReference>
<dbReference type="HOGENOM" id="CLU_071415_2_3_9"/>
<dbReference type="OrthoDB" id="9784339at2"/>
<dbReference type="Proteomes" id="UP000001411">
    <property type="component" value="Chromosome"/>
</dbReference>
<dbReference type="GO" id="GO:0004725">
    <property type="term" value="F:protein tyrosine phosphatase activity"/>
    <property type="evidence" value="ECO:0007669"/>
    <property type="project" value="UniProtKB-EC"/>
</dbReference>
<dbReference type="CDD" id="cd16343">
    <property type="entry name" value="LMWPTP"/>
    <property type="match status" value="1"/>
</dbReference>
<dbReference type="Gene3D" id="3.40.50.2300">
    <property type="match status" value="1"/>
</dbReference>
<dbReference type="InterPro" id="IPR050438">
    <property type="entry name" value="LMW_PTPase"/>
</dbReference>
<dbReference type="InterPro" id="IPR023485">
    <property type="entry name" value="Ptyr_pPase"/>
</dbReference>
<dbReference type="InterPro" id="IPR036196">
    <property type="entry name" value="Ptyr_pPase_sf"/>
</dbReference>
<dbReference type="InterPro" id="IPR017867">
    <property type="entry name" value="Tyr_phospatase_low_mol_wt"/>
</dbReference>
<dbReference type="PANTHER" id="PTHR11717:SF7">
    <property type="entry name" value="LOW MOLECULAR WEIGHT PHOSPHOTYROSINE PROTEIN PHOSPHATASE"/>
    <property type="match status" value="1"/>
</dbReference>
<dbReference type="PANTHER" id="PTHR11717">
    <property type="entry name" value="LOW MOLECULAR WEIGHT PROTEIN TYROSINE PHOSPHATASE"/>
    <property type="match status" value="1"/>
</dbReference>
<dbReference type="Pfam" id="PF01451">
    <property type="entry name" value="LMWPc"/>
    <property type="match status" value="1"/>
</dbReference>
<dbReference type="PRINTS" id="PR00719">
    <property type="entry name" value="LMWPTPASE"/>
</dbReference>
<dbReference type="SMART" id="SM00226">
    <property type="entry name" value="LMWPc"/>
    <property type="match status" value="1"/>
</dbReference>
<dbReference type="SUPFAM" id="SSF52788">
    <property type="entry name" value="Phosphotyrosine protein phosphatases I"/>
    <property type="match status" value="1"/>
</dbReference>
<gene>
    <name type="primary">ptpA</name>
    <name type="ordered locus">SE_1566</name>
</gene>
<reference key="1">
    <citation type="journal article" date="2003" name="Mol. Microbiol.">
        <title>Genome-based analysis of virulence genes in a non-biofilm-forming Staphylococcus epidermidis strain (ATCC 12228).</title>
        <authorList>
            <person name="Zhang Y.-Q."/>
            <person name="Ren S.-X."/>
            <person name="Li H.-L."/>
            <person name="Wang Y.-X."/>
            <person name="Fu G."/>
            <person name="Yang J."/>
            <person name="Qin Z.-Q."/>
            <person name="Miao Y.-G."/>
            <person name="Wang W.-Y."/>
            <person name="Chen R.-S."/>
            <person name="Shen Y."/>
            <person name="Chen Z."/>
            <person name="Yuan Z.-H."/>
            <person name="Zhao G.-P."/>
            <person name="Qu D."/>
            <person name="Danchin A."/>
            <person name="Wen Y.-M."/>
        </authorList>
    </citation>
    <scope>NUCLEOTIDE SEQUENCE [LARGE SCALE GENOMIC DNA]</scope>
    <source>
        <strain>ATCC 12228 / FDA PCI 1200</strain>
    </source>
</reference>
<proteinExistence type="inferred from homology"/>
<sequence length="154" mass="17760">MIHVAFVCLGNICRSPMAEAIMRQRLQERGISDIKVHSRGTGRWNLGEPPHNGTQKILQKYHIPYDGMVSELFEPDDDFDYIIAMDQSNVDNIKQINPNLQGQLFKLLEFSNMEESDVPDPYYTNNFEGVFEMVQSSCDNLIDYIVKDANLKER</sequence>
<organism>
    <name type="scientific">Staphylococcus epidermidis (strain ATCC 12228 / FDA PCI 1200)</name>
    <dbReference type="NCBI Taxonomy" id="176280"/>
    <lineage>
        <taxon>Bacteria</taxon>
        <taxon>Bacillati</taxon>
        <taxon>Bacillota</taxon>
        <taxon>Bacilli</taxon>
        <taxon>Bacillales</taxon>
        <taxon>Staphylococcaceae</taxon>
        <taxon>Staphylococcus</taxon>
    </lineage>
</organism>
<evidence type="ECO:0000250" key="1"/>
<evidence type="ECO:0000250" key="2">
    <source>
        <dbReference type="UniProtKB" id="P11064"/>
    </source>
</evidence>
<evidence type="ECO:0000305" key="3"/>